<proteinExistence type="inferred from homology"/>
<dbReference type="EMBL" id="CP000562">
    <property type="protein sequence ID" value="ABN57392.1"/>
    <property type="molecule type" value="Genomic_DNA"/>
</dbReference>
<dbReference type="RefSeq" id="WP_011844303.1">
    <property type="nucleotide sequence ID" value="NC_009051.1"/>
</dbReference>
<dbReference type="SMR" id="A3CVJ2"/>
<dbReference type="STRING" id="368407.Memar_1463"/>
<dbReference type="GeneID" id="4848056"/>
<dbReference type="KEGG" id="mem:Memar_1463"/>
<dbReference type="eggNOG" id="arCOG00488">
    <property type="taxonomic scope" value="Archaea"/>
</dbReference>
<dbReference type="HOGENOM" id="CLU_043978_1_1_2"/>
<dbReference type="OrthoDB" id="14749at2157"/>
<dbReference type="Proteomes" id="UP000002146">
    <property type="component" value="Chromosome"/>
</dbReference>
<dbReference type="GO" id="GO:0003677">
    <property type="term" value="F:DNA binding"/>
    <property type="evidence" value="ECO:0007669"/>
    <property type="project" value="UniProtKB-UniRule"/>
</dbReference>
<dbReference type="GO" id="GO:0030337">
    <property type="term" value="F:DNA polymerase processivity factor activity"/>
    <property type="evidence" value="ECO:0007669"/>
    <property type="project" value="UniProtKB-UniRule"/>
</dbReference>
<dbReference type="GO" id="GO:0006272">
    <property type="term" value="P:leading strand elongation"/>
    <property type="evidence" value="ECO:0007669"/>
    <property type="project" value="TreeGrafter"/>
</dbReference>
<dbReference type="GO" id="GO:0006275">
    <property type="term" value="P:regulation of DNA replication"/>
    <property type="evidence" value="ECO:0007669"/>
    <property type="project" value="UniProtKB-UniRule"/>
</dbReference>
<dbReference type="CDD" id="cd00577">
    <property type="entry name" value="PCNA"/>
    <property type="match status" value="1"/>
</dbReference>
<dbReference type="Gene3D" id="3.70.10.10">
    <property type="match status" value="1"/>
</dbReference>
<dbReference type="HAMAP" id="MF_00317">
    <property type="entry name" value="DNApol_clamp_arch"/>
    <property type="match status" value="1"/>
</dbReference>
<dbReference type="InterPro" id="IPR046938">
    <property type="entry name" value="DNA_clamp_sf"/>
</dbReference>
<dbReference type="InterPro" id="IPR000730">
    <property type="entry name" value="Pr_cel_nuc_antig"/>
</dbReference>
<dbReference type="InterPro" id="IPR022648">
    <property type="entry name" value="Pr_cel_nuc_antig_N"/>
</dbReference>
<dbReference type="NCBIfam" id="NF002222">
    <property type="entry name" value="PRK01115.1-5"/>
    <property type="match status" value="1"/>
</dbReference>
<dbReference type="PANTHER" id="PTHR11352">
    <property type="entry name" value="PROLIFERATING CELL NUCLEAR ANTIGEN"/>
    <property type="match status" value="1"/>
</dbReference>
<dbReference type="PANTHER" id="PTHR11352:SF0">
    <property type="entry name" value="PROLIFERATING CELL NUCLEAR ANTIGEN"/>
    <property type="match status" value="1"/>
</dbReference>
<dbReference type="Pfam" id="PF00705">
    <property type="entry name" value="PCNA_N"/>
    <property type="match status" value="1"/>
</dbReference>
<dbReference type="PRINTS" id="PR00339">
    <property type="entry name" value="PCNACYCLIN"/>
</dbReference>
<dbReference type="SUPFAM" id="SSF55979">
    <property type="entry name" value="DNA clamp"/>
    <property type="match status" value="2"/>
</dbReference>
<protein>
    <recommendedName>
        <fullName evidence="1">DNA polymerase sliding clamp</fullName>
    </recommendedName>
    <alternativeName>
        <fullName evidence="1">Proliferating cell nuclear antigen homolog</fullName>
        <shortName evidence="1">PCNA</shortName>
    </alternativeName>
</protein>
<reference key="1">
    <citation type="journal article" date="2009" name="Stand. Genomic Sci.">
        <title>Complete genome sequence of Methanoculleus marisnigri Romesser et al. 1981 type strain JR1.</title>
        <authorList>
            <person name="Anderson I.J."/>
            <person name="Sieprawska-Lupa M."/>
            <person name="Lapidus A."/>
            <person name="Nolan M."/>
            <person name="Copeland A."/>
            <person name="Glavina Del Rio T."/>
            <person name="Tice H."/>
            <person name="Dalin E."/>
            <person name="Barry K."/>
            <person name="Saunders E."/>
            <person name="Han C."/>
            <person name="Brettin T."/>
            <person name="Detter J.C."/>
            <person name="Bruce D."/>
            <person name="Mikhailova N."/>
            <person name="Pitluck S."/>
            <person name="Hauser L."/>
            <person name="Land M."/>
            <person name="Lucas S."/>
            <person name="Richardson P."/>
            <person name="Whitman W.B."/>
            <person name="Kyrpides N.C."/>
        </authorList>
    </citation>
    <scope>NUCLEOTIDE SEQUENCE [LARGE SCALE GENOMIC DNA]</scope>
    <source>
        <strain>ATCC 35101 / DSM 1498 / JR1</strain>
    </source>
</reference>
<organism>
    <name type="scientific">Methanoculleus marisnigri (strain ATCC 35101 / DSM 1498 / JR1)</name>
    <dbReference type="NCBI Taxonomy" id="368407"/>
    <lineage>
        <taxon>Archaea</taxon>
        <taxon>Methanobacteriati</taxon>
        <taxon>Methanobacteriota</taxon>
        <taxon>Stenosarchaea group</taxon>
        <taxon>Methanomicrobia</taxon>
        <taxon>Methanomicrobiales</taxon>
        <taxon>Methanomicrobiaceae</taxon>
        <taxon>Methanoculleus</taxon>
    </lineage>
</organism>
<name>PCNA_METMJ</name>
<feature type="chain" id="PRO_1000132970" description="DNA polymerase sliding clamp">
    <location>
        <begin position="1"/>
        <end position="247"/>
    </location>
</feature>
<sequence>MLKATIDAEIFRESIDAIAALVTECRLHTAEDQIRTRSVDTANVAMVSLELQSTAFNSFSATAGELGLDIAKMKNIIGMMGKGDALTLTLLDEERKLELSFGGYRYSISLLDVNTIRKDPNPPGIDLPGKAVVPGDALNNAIKAAAVISDKIALGIDPDAMTFYMEAEGDTDHIKLALGEDELVALSPVQARSLFSIDYLKDMGRVMARADKVEVYLGIDHPVRFVFDIADGNGRVEYLLAPRIEAD</sequence>
<evidence type="ECO:0000255" key="1">
    <source>
        <dbReference type="HAMAP-Rule" id="MF_00317"/>
    </source>
</evidence>
<accession>A3CVJ2</accession>
<keyword id="KW-0235">DNA replication</keyword>
<keyword id="KW-0238">DNA-binding</keyword>
<gene>
    <name evidence="1" type="primary">pcn</name>
    <name type="ordered locus">Memar_1463</name>
</gene>
<comment type="function">
    <text evidence="1">Sliding clamp subunit that acts as a moving platform for DNA processing. Responsible for tethering the catalytic subunit of DNA polymerase and other proteins to DNA during high-speed replication.</text>
</comment>
<comment type="subunit">
    <text evidence="1">Homotrimer. The subunits circularize to form a toroid; DNA passes through its center. Replication factor C (RFC) is required to load the toroid on the DNA.</text>
</comment>
<comment type="similarity">
    <text evidence="1">Belongs to the PCNA family.</text>
</comment>